<reference key="1">
    <citation type="submission" date="1992-07" db="EMBL/GenBank/DDBJ databases">
        <authorList>
            <person name="Scharf K.D."/>
        </authorList>
    </citation>
    <scope>NUCLEOTIDE SEQUENCE [GENOMIC DNA]</scope>
    <source>
        <tissue>Leaf</tissue>
    </source>
</reference>
<sequence>MEPNSYGSGKAAVGDGVGAPMLQTAPAPAPIPSANAPPPFLVKTYDMVDDPSTDKIVSWSPTNNSFVVWDPPEFAKDLLPKYFKHNNFSSFVRQLNTYGFRKVDPDRWEFANEGFLRGQKHLLKSISRRKPAHGHAQQQQQPHGNAQQQMQPPGHSASVGACVEVGKFGLEEEVERLKRDKNVLMQELVRLRQQQQATDNQLQGMVQRLQGMELRQQQMMSFLAKAVNRPGFLAQFVQQQNESNKRIAEGSKKRRIKQDIESQDPSVTPADGQIVKYQPGINEAAKAMLRELSKLDSSPRLDNFSNSPESFLIGDGSPQSNASSGRVSGVTLQEVPPTSGKPLLNTASAIAGQSLLPATSEMQSSHLGTCSEIINNQLSNIIPLVGGEDLHPGSLSASDMIMPELSQLQGILPENNTDVIGCDSFMDTSAVEGKVGLDIIGSCLSPGADIDWQSGLLDEIEEFPSVGDPFWEKFLQSPCSPDAAMDDDISNTSETKPQINGWDKTQNMEHLTEQMGATNIKQQKHMI</sequence>
<accession>Q40152</accession>
<proteinExistence type="inferred from homology"/>
<organism>
    <name type="scientific">Solanum lycopersicum</name>
    <name type="common">Tomato</name>
    <name type="synonym">Lycopersicon esculentum</name>
    <dbReference type="NCBI Taxonomy" id="4081"/>
    <lineage>
        <taxon>Eukaryota</taxon>
        <taxon>Viridiplantae</taxon>
        <taxon>Streptophyta</taxon>
        <taxon>Embryophyta</taxon>
        <taxon>Tracheophyta</taxon>
        <taxon>Spermatophyta</taxon>
        <taxon>Magnoliopsida</taxon>
        <taxon>eudicotyledons</taxon>
        <taxon>Gunneridae</taxon>
        <taxon>Pentapetalae</taxon>
        <taxon>asterids</taxon>
        <taxon>lamiids</taxon>
        <taxon>Solanales</taxon>
        <taxon>Solanaceae</taxon>
        <taxon>Solanoideae</taxon>
        <taxon>Solaneae</taxon>
        <taxon>Solanum</taxon>
        <taxon>Solanum subgen. Lycopersicon</taxon>
    </lineage>
</organism>
<gene>
    <name type="primary">HSF8</name>
</gene>
<feature type="chain" id="PRO_0000124591" description="Heat shock factor protein HSF8">
    <location>
        <begin position="1"/>
        <end position="527"/>
    </location>
</feature>
<feature type="DNA-binding region" evidence="1">
    <location>
        <begin position="39"/>
        <end position="133"/>
    </location>
</feature>
<feature type="region of interest" description="Disordered" evidence="2">
    <location>
        <begin position="128"/>
        <end position="158"/>
    </location>
</feature>
<feature type="region of interest" description="Disordered" evidence="2">
    <location>
        <begin position="241"/>
        <end position="273"/>
    </location>
</feature>
<feature type="region of interest" description="Disordered" evidence="2">
    <location>
        <begin position="297"/>
        <end position="341"/>
    </location>
</feature>
<feature type="compositionally biased region" description="Low complexity" evidence="2">
    <location>
        <begin position="134"/>
        <end position="152"/>
    </location>
</feature>
<feature type="compositionally biased region" description="Polar residues" evidence="2">
    <location>
        <begin position="317"/>
        <end position="326"/>
    </location>
</feature>
<protein>
    <recommendedName>
        <fullName>Heat shock factor protein HSF8</fullName>
    </recommendedName>
    <alternativeName>
        <fullName>Heat shock transcription factor 8</fullName>
        <shortName>HSTF 8</shortName>
    </alternativeName>
    <alternativeName>
        <fullName>Heat stress transcription factor</fullName>
    </alternativeName>
</protein>
<evidence type="ECO:0000250" key="1"/>
<evidence type="ECO:0000256" key="2">
    <source>
        <dbReference type="SAM" id="MobiDB-lite"/>
    </source>
</evidence>
<evidence type="ECO:0000305" key="3"/>
<dbReference type="EMBL" id="X67599">
    <property type="protein sequence ID" value="CAA47868.1"/>
    <property type="molecule type" value="Genomic_DNA"/>
</dbReference>
<dbReference type="PIR" id="S25478">
    <property type="entry name" value="S25478"/>
</dbReference>
<dbReference type="RefSeq" id="NP_001296177.1">
    <property type="nucleotide sequence ID" value="NM_001309248.1"/>
</dbReference>
<dbReference type="SMR" id="Q40152"/>
<dbReference type="FunCoup" id="Q40152">
    <property type="interactions" value="1543"/>
</dbReference>
<dbReference type="STRING" id="4081.Q40152"/>
<dbReference type="PaxDb" id="4081-Solyc08g005170.2.1"/>
<dbReference type="EnsemblPlants" id="Solyc08g005170.3.1">
    <property type="protein sequence ID" value="Solyc08g005170.3.1"/>
    <property type="gene ID" value="Solyc08g005170.3"/>
</dbReference>
<dbReference type="GeneID" id="101263626"/>
<dbReference type="Gramene" id="Solyc08g005170.3.1">
    <property type="protein sequence ID" value="Solyc08g005170.3.1"/>
    <property type="gene ID" value="Solyc08g005170.3"/>
</dbReference>
<dbReference type="KEGG" id="sly:101263626"/>
<dbReference type="eggNOG" id="KOG0627">
    <property type="taxonomic scope" value="Eukaryota"/>
</dbReference>
<dbReference type="HOGENOM" id="CLU_030308_0_4_1"/>
<dbReference type="InParanoid" id="Q40152"/>
<dbReference type="OMA" id="MGATNIK"/>
<dbReference type="OrthoDB" id="60033at2759"/>
<dbReference type="PhylomeDB" id="Q40152"/>
<dbReference type="Proteomes" id="UP000004994">
    <property type="component" value="Chromosome 8"/>
</dbReference>
<dbReference type="GO" id="GO:0005634">
    <property type="term" value="C:nucleus"/>
    <property type="evidence" value="ECO:0000318"/>
    <property type="project" value="GO_Central"/>
</dbReference>
<dbReference type="GO" id="GO:0003700">
    <property type="term" value="F:DNA-binding transcription factor activity"/>
    <property type="evidence" value="ECO:0000318"/>
    <property type="project" value="GO_Central"/>
</dbReference>
<dbReference type="GO" id="GO:0043565">
    <property type="term" value="F:sequence-specific DNA binding"/>
    <property type="evidence" value="ECO:0007669"/>
    <property type="project" value="InterPro"/>
</dbReference>
<dbReference type="GO" id="GO:0034605">
    <property type="term" value="P:cellular response to heat"/>
    <property type="evidence" value="ECO:0000318"/>
    <property type="project" value="GO_Central"/>
</dbReference>
<dbReference type="GO" id="GO:0006357">
    <property type="term" value="P:regulation of transcription by RNA polymerase II"/>
    <property type="evidence" value="ECO:0000318"/>
    <property type="project" value="GO_Central"/>
</dbReference>
<dbReference type="FunFam" id="1.10.10.10:FF:000057">
    <property type="entry name" value="Heat shock transcription factor 1"/>
    <property type="match status" value="1"/>
</dbReference>
<dbReference type="Gene3D" id="1.10.10.10">
    <property type="entry name" value="Winged helix-like DNA-binding domain superfamily/Winged helix DNA-binding domain"/>
    <property type="match status" value="1"/>
</dbReference>
<dbReference type="InterPro" id="IPR000232">
    <property type="entry name" value="HSF_DNA-bd"/>
</dbReference>
<dbReference type="InterPro" id="IPR036388">
    <property type="entry name" value="WH-like_DNA-bd_sf"/>
</dbReference>
<dbReference type="InterPro" id="IPR036390">
    <property type="entry name" value="WH_DNA-bd_sf"/>
</dbReference>
<dbReference type="PANTHER" id="PTHR10015">
    <property type="entry name" value="HEAT SHOCK TRANSCRIPTION FACTOR"/>
    <property type="match status" value="1"/>
</dbReference>
<dbReference type="PANTHER" id="PTHR10015:SF436">
    <property type="entry name" value="HEAT STRESS TRANSCRIPTION FACTOR A-1D"/>
    <property type="match status" value="1"/>
</dbReference>
<dbReference type="Pfam" id="PF00447">
    <property type="entry name" value="HSF_DNA-bind"/>
    <property type="match status" value="1"/>
</dbReference>
<dbReference type="PRINTS" id="PR00056">
    <property type="entry name" value="HSFDOMAIN"/>
</dbReference>
<dbReference type="SMART" id="SM00415">
    <property type="entry name" value="HSF"/>
    <property type="match status" value="1"/>
</dbReference>
<dbReference type="SUPFAM" id="SSF46785">
    <property type="entry name" value="Winged helix' DNA-binding domain"/>
    <property type="match status" value="1"/>
</dbReference>
<dbReference type="PROSITE" id="PS00434">
    <property type="entry name" value="HSF_DOMAIN"/>
    <property type="match status" value="1"/>
</dbReference>
<comment type="function">
    <text evidence="1">DNA-binding protein that specifically binds heat shock promoter elements (HSE) and activates transcription.</text>
</comment>
<comment type="subunit">
    <text evidence="1">Homotrimer.</text>
</comment>
<comment type="subcellular location">
    <subcellularLocation>
        <location>Nucleus</location>
    </subcellularLocation>
</comment>
<comment type="PTM">
    <text evidence="1">Exhibits temperature-dependent phosphorylation.</text>
</comment>
<comment type="similarity">
    <text evidence="3">Belongs to the HSF family.</text>
</comment>
<keyword id="KW-0010">Activator</keyword>
<keyword id="KW-0238">DNA-binding</keyword>
<keyword id="KW-0539">Nucleus</keyword>
<keyword id="KW-0597">Phosphoprotein</keyword>
<keyword id="KW-1185">Reference proteome</keyword>
<keyword id="KW-0346">Stress response</keyword>
<keyword id="KW-0804">Transcription</keyword>
<keyword id="KW-0805">Transcription regulation</keyword>
<name>HSF8_SOLLC</name>